<keyword id="KW-1185">Reference proteome</keyword>
<keyword id="KW-0686">Riboflavin biosynthesis</keyword>
<keyword id="KW-0808">Transferase</keyword>
<protein>
    <recommendedName>
        <fullName evidence="1">6,7-dimethyl-8-ribityllumazine synthase</fullName>
        <shortName evidence="1">DMRL synthase</shortName>
        <shortName evidence="1">LS</shortName>
        <shortName evidence="1">Lumazine synthase</shortName>
        <ecNumber evidence="1">2.5.1.78</ecNumber>
    </recommendedName>
</protein>
<comment type="function">
    <text evidence="1">Catalyzes the formation of 6,7-dimethyl-8-ribityllumazine by condensation of 5-amino-6-(D-ribitylamino)uracil with 3,4-dihydroxy-2-butanone 4-phosphate. This is the penultimate step in the biosynthesis of riboflavin.</text>
</comment>
<comment type="catalytic activity">
    <reaction evidence="1">
        <text>(2S)-2-hydroxy-3-oxobutyl phosphate + 5-amino-6-(D-ribitylamino)uracil = 6,7-dimethyl-8-(1-D-ribityl)lumazine + phosphate + 2 H2O + H(+)</text>
        <dbReference type="Rhea" id="RHEA:26152"/>
        <dbReference type="ChEBI" id="CHEBI:15377"/>
        <dbReference type="ChEBI" id="CHEBI:15378"/>
        <dbReference type="ChEBI" id="CHEBI:15934"/>
        <dbReference type="ChEBI" id="CHEBI:43474"/>
        <dbReference type="ChEBI" id="CHEBI:58201"/>
        <dbReference type="ChEBI" id="CHEBI:58830"/>
        <dbReference type="EC" id="2.5.1.78"/>
    </reaction>
</comment>
<comment type="pathway">
    <text evidence="1">Cofactor biosynthesis; riboflavin biosynthesis; riboflavin from 2-hydroxy-3-oxobutyl phosphate and 5-amino-6-(D-ribitylamino)uracil: step 1/2.</text>
</comment>
<comment type="similarity">
    <text evidence="1">Belongs to the DMRL synthase family.</text>
</comment>
<sequence length="181" mass="18903">MVTPRRDSGSDRPSLKDARILVVEARYYDDIADELLRGATEAIAASGAEAEVVTVPGALEIPQTVAILVEAAMRSGKPYDAVVALGCVIRGETGHYDIVAGESARALMDLSVLLRLPLGNGILTVETEAQAQARARVSEMNKGGGAAEAALAVLALKRANAAEHPGRTIGFTPRRAAETAE</sequence>
<proteinExistence type="inferred from homology"/>
<accession>B8IPI3</accession>
<evidence type="ECO:0000255" key="1">
    <source>
        <dbReference type="HAMAP-Rule" id="MF_00178"/>
    </source>
</evidence>
<gene>
    <name evidence="1" type="primary">ribH</name>
    <name type="ordered locus">Mnod_7539</name>
</gene>
<organism>
    <name type="scientific">Methylobacterium nodulans (strain LMG 21967 / CNCM I-2342 / ORS 2060)</name>
    <dbReference type="NCBI Taxonomy" id="460265"/>
    <lineage>
        <taxon>Bacteria</taxon>
        <taxon>Pseudomonadati</taxon>
        <taxon>Pseudomonadota</taxon>
        <taxon>Alphaproteobacteria</taxon>
        <taxon>Hyphomicrobiales</taxon>
        <taxon>Methylobacteriaceae</taxon>
        <taxon>Methylobacterium</taxon>
    </lineage>
</organism>
<feature type="chain" id="PRO_1000195498" description="6,7-dimethyl-8-ribityllumazine synthase">
    <location>
        <begin position="1"/>
        <end position="181"/>
    </location>
</feature>
<feature type="active site" description="Proton donor" evidence="1">
    <location>
        <position position="95"/>
    </location>
</feature>
<feature type="binding site" evidence="1">
    <location>
        <position position="27"/>
    </location>
    <ligand>
        <name>5-amino-6-(D-ribitylamino)uracil</name>
        <dbReference type="ChEBI" id="CHEBI:15934"/>
    </ligand>
</feature>
<feature type="binding site" evidence="1">
    <location>
        <begin position="58"/>
        <end position="60"/>
    </location>
    <ligand>
        <name>5-amino-6-(D-ribitylamino)uracil</name>
        <dbReference type="ChEBI" id="CHEBI:15934"/>
    </ligand>
</feature>
<feature type="binding site" evidence="1">
    <location>
        <begin position="87"/>
        <end position="89"/>
    </location>
    <ligand>
        <name>5-amino-6-(D-ribitylamino)uracil</name>
        <dbReference type="ChEBI" id="CHEBI:15934"/>
    </ligand>
</feature>
<feature type="binding site" evidence="1">
    <location>
        <begin position="92"/>
        <end position="93"/>
    </location>
    <ligand>
        <name>(2S)-2-hydroxy-3-oxobutyl phosphate</name>
        <dbReference type="ChEBI" id="CHEBI:58830"/>
    </ligand>
</feature>
<feature type="binding site" evidence="1">
    <location>
        <position position="120"/>
    </location>
    <ligand>
        <name>5-amino-6-(D-ribitylamino)uracil</name>
        <dbReference type="ChEBI" id="CHEBI:15934"/>
    </ligand>
</feature>
<feature type="binding site" evidence="1">
    <location>
        <position position="134"/>
    </location>
    <ligand>
        <name>(2S)-2-hydroxy-3-oxobutyl phosphate</name>
        <dbReference type="ChEBI" id="CHEBI:58830"/>
    </ligand>
</feature>
<reference key="1">
    <citation type="submission" date="2009-01" db="EMBL/GenBank/DDBJ databases">
        <title>Complete sequence of chromosome of Methylobacterium nodulans ORS 2060.</title>
        <authorList>
            <consortium name="US DOE Joint Genome Institute"/>
            <person name="Lucas S."/>
            <person name="Copeland A."/>
            <person name="Lapidus A."/>
            <person name="Glavina del Rio T."/>
            <person name="Dalin E."/>
            <person name="Tice H."/>
            <person name="Bruce D."/>
            <person name="Goodwin L."/>
            <person name="Pitluck S."/>
            <person name="Sims D."/>
            <person name="Brettin T."/>
            <person name="Detter J.C."/>
            <person name="Han C."/>
            <person name="Larimer F."/>
            <person name="Land M."/>
            <person name="Hauser L."/>
            <person name="Kyrpides N."/>
            <person name="Ivanova N."/>
            <person name="Marx C.J."/>
            <person name="Richardson P."/>
        </authorList>
    </citation>
    <scope>NUCLEOTIDE SEQUENCE [LARGE SCALE GENOMIC DNA]</scope>
    <source>
        <strain>LMG 21967 / CNCM I-2342 / ORS 2060</strain>
    </source>
</reference>
<dbReference type="EC" id="2.5.1.78" evidence="1"/>
<dbReference type="EMBL" id="CP001349">
    <property type="protein sequence ID" value="ACL62275.1"/>
    <property type="molecule type" value="Genomic_DNA"/>
</dbReference>
<dbReference type="RefSeq" id="WP_015933829.1">
    <property type="nucleotide sequence ID" value="NC_011894.1"/>
</dbReference>
<dbReference type="SMR" id="B8IPI3"/>
<dbReference type="STRING" id="460265.Mnod_7539"/>
<dbReference type="KEGG" id="mno:Mnod_7539"/>
<dbReference type="eggNOG" id="COG0054">
    <property type="taxonomic scope" value="Bacteria"/>
</dbReference>
<dbReference type="HOGENOM" id="CLU_089358_1_2_5"/>
<dbReference type="OrthoDB" id="9809709at2"/>
<dbReference type="UniPathway" id="UPA00275">
    <property type="reaction ID" value="UER00404"/>
</dbReference>
<dbReference type="Proteomes" id="UP000008207">
    <property type="component" value="Chromosome"/>
</dbReference>
<dbReference type="GO" id="GO:0005829">
    <property type="term" value="C:cytosol"/>
    <property type="evidence" value="ECO:0007669"/>
    <property type="project" value="TreeGrafter"/>
</dbReference>
<dbReference type="GO" id="GO:0009349">
    <property type="term" value="C:riboflavin synthase complex"/>
    <property type="evidence" value="ECO:0007669"/>
    <property type="project" value="InterPro"/>
</dbReference>
<dbReference type="GO" id="GO:0000906">
    <property type="term" value="F:6,7-dimethyl-8-ribityllumazine synthase activity"/>
    <property type="evidence" value="ECO:0007669"/>
    <property type="project" value="UniProtKB-UniRule"/>
</dbReference>
<dbReference type="GO" id="GO:0009231">
    <property type="term" value="P:riboflavin biosynthetic process"/>
    <property type="evidence" value="ECO:0007669"/>
    <property type="project" value="UniProtKB-UniRule"/>
</dbReference>
<dbReference type="CDD" id="cd09209">
    <property type="entry name" value="Lumazine_synthase-I"/>
    <property type="match status" value="1"/>
</dbReference>
<dbReference type="Gene3D" id="3.40.50.960">
    <property type="entry name" value="Lumazine/riboflavin synthase"/>
    <property type="match status" value="1"/>
</dbReference>
<dbReference type="HAMAP" id="MF_00178">
    <property type="entry name" value="Lumazine_synth"/>
    <property type="match status" value="1"/>
</dbReference>
<dbReference type="InterPro" id="IPR034964">
    <property type="entry name" value="LS"/>
</dbReference>
<dbReference type="InterPro" id="IPR002180">
    <property type="entry name" value="LS/RS"/>
</dbReference>
<dbReference type="InterPro" id="IPR036467">
    <property type="entry name" value="LS/RS_sf"/>
</dbReference>
<dbReference type="NCBIfam" id="TIGR00114">
    <property type="entry name" value="lumazine-synth"/>
    <property type="match status" value="1"/>
</dbReference>
<dbReference type="PANTHER" id="PTHR21058:SF0">
    <property type="entry name" value="6,7-DIMETHYL-8-RIBITYLLUMAZINE SYNTHASE"/>
    <property type="match status" value="1"/>
</dbReference>
<dbReference type="PANTHER" id="PTHR21058">
    <property type="entry name" value="6,7-DIMETHYL-8-RIBITYLLUMAZINE SYNTHASE DMRL SYNTHASE LUMAZINE SYNTHASE"/>
    <property type="match status" value="1"/>
</dbReference>
<dbReference type="Pfam" id="PF00885">
    <property type="entry name" value="DMRL_synthase"/>
    <property type="match status" value="1"/>
</dbReference>
<dbReference type="SUPFAM" id="SSF52121">
    <property type="entry name" value="Lumazine synthase"/>
    <property type="match status" value="1"/>
</dbReference>
<name>RISB_METNO</name>